<accession>Q49WM9</accession>
<reference key="1">
    <citation type="journal article" date="2005" name="Proc. Natl. Acad. Sci. U.S.A.">
        <title>Whole genome sequence of Staphylococcus saprophyticus reveals the pathogenesis of uncomplicated urinary tract infection.</title>
        <authorList>
            <person name="Kuroda M."/>
            <person name="Yamashita A."/>
            <person name="Hirakawa H."/>
            <person name="Kumano M."/>
            <person name="Morikawa K."/>
            <person name="Higashide M."/>
            <person name="Maruyama A."/>
            <person name="Inose Y."/>
            <person name="Matoba K."/>
            <person name="Toh H."/>
            <person name="Kuhara S."/>
            <person name="Hattori M."/>
            <person name="Ohta T."/>
        </authorList>
    </citation>
    <scope>NUCLEOTIDE SEQUENCE [LARGE SCALE GENOMIC DNA]</scope>
    <source>
        <strain>ATCC 15305 / DSM 20229 / NCIMB 8711 / NCTC 7292 / S-41</strain>
    </source>
</reference>
<dbReference type="EMBL" id="AP008934">
    <property type="protein sequence ID" value="BAE18830.1"/>
    <property type="molecule type" value="Genomic_DNA"/>
</dbReference>
<dbReference type="SMR" id="Q49WM9"/>
<dbReference type="KEGG" id="ssp:SSP1685"/>
<dbReference type="eggNOG" id="COG1914">
    <property type="taxonomic scope" value="Bacteria"/>
</dbReference>
<dbReference type="HOGENOM" id="CLU_020088_2_0_9"/>
<dbReference type="Proteomes" id="UP000006371">
    <property type="component" value="Chromosome"/>
</dbReference>
<dbReference type="GO" id="GO:0005886">
    <property type="term" value="C:plasma membrane"/>
    <property type="evidence" value="ECO:0007669"/>
    <property type="project" value="UniProtKB-SubCell"/>
</dbReference>
<dbReference type="GO" id="GO:0015086">
    <property type="term" value="F:cadmium ion transmembrane transporter activity"/>
    <property type="evidence" value="ECO:0007669"/>
    <property type="project" value="TreeGrafter"/>
</dbReference>
<dbReference type="GO" id="GO:0005384">
    <property type="term" value="F:manganese ion transmembrane transporter activity"/>
    <property type="evidence" value="ECO:0007669"/>
    <property type="project" value="TreeGrafter"/>
</dbReference>
<dbReference type="GO" id="GO:0046872">
    <property type="term" value="F:metal ion binding"/>
    <property type="evidence" value="ECO:0007669"/>
    <property type="project" value="UniProtKB-UniRule"/>
</dbReference>
<dbReference type="GO" id="GO:0015293">
    <property type="term" value="F:symporter activity"/>
    <property type="evidence" value="ECO:0007669"/>
    <property type="project" value="UniProtKB-UniRule"/>
</dbReference>
<dbReference type="GO" id="GO:0034755">
    <property type="term" value="P:iron ion transmembrane transport"/>
    <property type="evidence" value="ECO:0007669"/>
    <property type="project" value="TreeGrafter"/>
</dbReference>
<dbReference type="HAMAP" id="MF_00221">
    <property type="entry name" value="NRAMP"/>
    <property type="match status" value="1"/>
</dbReference>
<dbReference type="InterPro" id="IPR001046">
    <property type="entry name" value="NRAMP_fam"/>
</dbReference>
<dbReference type="NCBIfam" id="TIGR01197">
    <property type="entry name" value="nramp"/>
    <property type="match status" value="1"/>
</dbReference>
<dbReference type="NCBIfam" id="NF037982">
    <property type="entry name" value="Nramp_1"/>
    <property type="match status" value="1"/>
</dbReference>
<dbReference type="NCBIfam" id="NF001923">
    <property type="entry name" value="PRK00701.1"/>
    <property type="match status" value="1"/>
</dbReference>
<dbReference type="PANTHER" id="PTHR11706:SF33">
    <property type="entry name" value="NATURAL RESISTANCE-ASSOCIATED MACROPHAGE PROTEIN 2"/>
    <property type="match status" value="1"/>
</dbReference>
<dbReference type="PANTHER" id="PTHR11706">
    <property type="entry name" value="SOLUTE CARRIER PROTEIN FAMILY 11 MEMBER"/>
    <property type="match status" value="1"/>
</dbReference>
<dbReference type="Pfam" id="PF01566">
    <property type="entry name" value="Nramp"/>
    <property type="match status" value="1"/>
</dbReference>
<dbReference type="PRINTS" id="PR00447">
    <property type="entry name" value="NATRESASSCMP"/>
</dbReference>
<comment type="function">
    <text evidence="1">H(+)-stimulated, divalent metal cation uptake system.</text>
</comment>
<comment type="subcellular location">
    <subcellularLocation>
        <location evidence="1">Cell membrane</location>
        <topology evidence="1">Multi-pass membrane protein</topology>
    </subcellularLocation>
</comment>
<comment type="similarity">
    <text evidence="1">Belongs to the NRAMP family.</text>
</comment>
<name>MNTH_STAS1</name>
<protein>
    <recommendedName>
        <fullName evidence="1">Divalent metal cation transporter MntH</fullName>
    </recommendedName>
</protein>
<sequence>MKNHVQTHNKSLDEINNTVSINTHGKFSQKLFSFLGPGLLVAVGYMDPGNWITSMQGGAQFGYILLFVILLSSLSAMLLQSMTIRLGISTGMDLAQATKHYLNKPVAFVFWIIAELAIIATDIAEVIGSAIALDLLFGIPLLVGALITVFDVFLLLFIMRFGFRKIEAIVGTLIFTVLVIFVFEVFIASPHVTEVLNGFVPSSTIITDNGALFIALGIIGATIMPHNLYLHSSIVQSRMYDRNSIQSKAHAIKYATMDSNIQLSIAFIVNCLLLVLGAALFFGVNTEQLGGFYDLYNALQNQPLLGASLGAIMSTLFAIALLASGQNSTITGTMAGQIVMEGFINLKIPNWLRRLITRLIAILPIIICLIVFNSNEAKMEQLLVFSQVFLSLALPFSLIPLQLSTNDKRLMGQFKNKLWVNIISWCLIIILSILNIYLIIQTFQEL</sequence>
<proteinExistence type="inferred from homology"/>
<feature type="chain" id="PRO_0000325610" description="Divalent metal cation transporter MntH">
    <location>
        <begin position="1"/>
        <end position="446"/>
    </location>
</feature>
<feature type="transmembrane region" description="Helical" evidence="1">
    <location>
        <begin position="32"/>
        <end position="52"/>
    </location>
</feature>
<feature type="transmembrane region" description="Helical" evidence="1">
    <location>
        <begin position="59"/>
        <end position="79"/>
    </location>
</feature>
<feature type="transmembrane region" description="Helical" evidence="1">
    <location>
        <begin position="107"/>
        <end position="127"/>
    </location>
</feature>
<feature type="transmembrane region" description="Helical" evidence="1">
    <location>
        <begin position="139"/>
        <end position="159"/>
    </location>
</feature>
<feature type="transmembrane region" description="Helical" evidence="1">
    <location>
        <begin position="168"/>
        <end position="188"/>
    </location>
</feature>
<feature type="transmembrane region" description="Helical" evidence="1">
    <location>
        <begin position="210"/>
        <end position="230"/>
    </location>
</feature>
<feature type="transmembrane region" description="Helical" evidence="1">
    <location>
        <begin position="264"/>
        <end position="284"/>
    </location>
</feature>
<feature type="transmembrane region" description="Helical" evidence="1">
    <location>
        <begin position="303"/>
        <end position="323"/>
    </location>
</feature>
<feature type="transmembrane region" description="Helical" evidence="1">
    <location>
        <begin position="355"/>
        <end position="375"/>
    </location>
</feature>
<feature type="transmembrane region" description="Helical" evidence="1">
    <location>
        <begin position="381"/>
        <end position="401"/>
    </location>
</feature>
<feature type="transmembrane region" description="Helical" evidence="1">
    <location>
        <begin position="420"/>
        <end position="440"/>
    </location>
</feature>
<gene>
    <name evidence="1" type="primary">mntH</name>
    <name type="ordered locus">SSP1685</name>
</gene>
<evidence type="ECO:0000255" key="1">
    <source>
        <dbReference type="HAMAP-Rule" id="MF_00221"/>
    </source>
</evidence>
<keyword id="KW-1003">Cell membrane</keyword>
<keyword id="KW-0406">Ion transport</keyword>
<keyword id="KW-0472">Membrane</keyword>
<keyword id="KW-1185">Reference proteome</keyword>
<keyword id="KW-0769">Symport</keyword>
<keyword id="KW-0812">Transmembrane</keyword>
<keyword id="KW-1133">Transmembrane helix</keyword>
<keyword id="KW-0813">Transport</keyword>
<organism>
    <name type="scientific">Staphylococcus saprophyticus subsp. saprophyticus (strain ATCC 15305 / DSM 20229 / NCIMB 8711 / NCTC 7292 / S-41)</name>
    <dbReference type="NCBI Taxonomy" id="342451"/>
    <lineage>
        <taxon>Bacteria</taxon>
        <taxon>Bacillati</taxon>
        <taxon>Bacillota</taxon>
        <taxon>Bacilli</taxon>
        <taxon>Bacillales</taxon>
        <taxon>Staphylococcaceae</taxon>
        <taxon>Staphylococcus</taxon>
    </lineage>
</organism>